<sequence>MQRRPLVAGNWKMHGSRESVGQLLRALKHGCERLETAELAVFPPFVFLQQCEEALMRTQISWGAQDVSEFERGAYTGEVSAAMLRDFHCRYVIVGHSERRQRHGETNEQVAAKVRAALRCGIRPIICVGETEKQRNANQTLSVIKEQLAVVLQMNDNLASLEGMVVAYEPIWAIGTGKNATPSQAEEVHAALRDQLHRQDATLAESTRLLYGGSVKPDNAAALFEMPNIDGALVGGASLEAEQFLKIGQQCNQSF</sequence>
<evidence type="ECO:0000255" key="1">
    <source>
        <dbReference type="HAMAP-Rule" id="MF_00147"/>
    </source>
</evidence>
<evidence type="ECO:0000305" key="2"/>
<organism>
    <name type="scientific">Coxiella burnetii (strain Dugway 5J108-111)</name>
    <dbReference type="NCBI Taxonomy" id="434922"/>
    <lineage>
        <taxon>Bacteria</taxon>
        <taxon>Pseudomonadati</taxon>
        <taxon>Pseudomonadota</taxon>
        <taxon>Gammaproteobacteria</taxon>
        <taxon>Legionellales</taxon>
        <taxon>Coxiellaceae</taxon>
        <taxon>Coxiella</taxon>
    </lineage>
</organism>
<reference key="1">
    <citation type="journal article" date="2009" name="Infect. Immun.">
        <title>Comparative genomics reveal extensive transposon-mediated genomic plasticity and diversity among potential effector proteins within the genus Coxiella.</title>
        <authorList>
            <person name="Beare P.A."/>
            <person name="Unsworth N."/>
            <person name="Andoh M."/>
            <person name="Voth D.E."/>
            <person name="Omsland A."/>
            <person name="Gilk S.D."/>
            <person name="Williams K.P."/>
            <person name="Sobral B.W."/>
            <person name="Kupko J.J. III"/>
            <person name="Porcella S.F."/>
            <person name="Samuel J.E."/>
            <person name="Heinzen R.A."/>
        </authorList>
    </citation>
    <scope>NUCLEOTIDE SEQUENCE [LARGE SCALE GENOMIC DNA]</scope>
    <source>
        <strain>Dugway 5J108-111</strain>
    </source>
</reference>
<proteinExistence type="inferred from homology"/>
<dbReference type="EC" id="5.3.1.1" evidence="1"/>
<dbReference type="EMBL" id="CP000733">
    <property type="protein sequence ID" value="ABS77929.2"/>
    <property type="status" value="ALT_INIT"/>
    <property type="molecule type" value="Genomic_DNA"/>
</dbReference>
<dbReference type="RefSeq" id="WP_005769081.1">
    <property type="nucleotide sequence ID" value="NC_009727.1"/>
</dbReference>
<dbReference type="SMR" id="A9KBK2"/>
<dbReference type="KEGG" id="cbd:CBUD_0542"/>
<dbReference type="HOGENOM" id="CLU_024251_2_1_6"/>
<dbReference type="UniPathway" id="UPA00109">
    <property type="reaction ID" value="UER00189"/>
</dbReference>
<dbReference type="UniPathway" id="UPA00138"/>
<dbReference type="Proteomes" id="UP000008555">
    <property type="component" value="Chromosome"/>
</dbReference>
<dbReference type="GO" id="GO:0005829">
    <property type="term" value="C:cytosol"/>
    <property type="evidence" value="ECO:0007669"/>
    <property type="project" value="TreeGrafter"/>
</dbReference>
<dbReference type="GO" id="GO:0004807">
    <property type="term" value="F:triose-phosphate isomerase activity"/>
    <property type="evidence" value="ECO:0007669"/>
    <property type="project" value="UniProtKB-UniRule"/>
</dbReference>
<dbReference type="GO" id="GO:0006094">
    <property type="term" value="P:gluconeogenesis"/>
    <property type="evidence" value="ECO:0007669"/>
    <property type="project" value="UniProtKB-UniRule"/>
</dbReference>
<dbReference type="GO" id="GO:0046166">
    <property type="term" value="P:glyceraldehyde-3-phosphate biosynthetic process"/>
    <property type="evidence" value="ECO:0007669"/>
    <property type="project" value="TreeGrafter"/>
</dbReference>
<dbReference type="GO" id="GO:0019563">
    <property type="term" value="P:glycerol catabolic process"/>
    <property type="evidence" value="ECO:0007669"/>
    <property type="project" value="TreeGrafter"/>
</dbReference>
<dbReference type="GO" id="GO:0006096">
    <property type="term" value="P:glycolytic process"/>
    <property type="evidence" value="ECO:0007669"/>
    <property type="project" value="UniProtKB-UniRule"/>
</dbReference>
<dbReference type="CDD" id="cd00311">
    <property type="entry name" value="TIM"/>
    <property type="match status" value="1"/>
</dbReference>
<dbReference type="FunFam" id="3.20.20.70:FF:000016">
    <property type="entry name" value="Triosephosphate isomerase"/>
    <property type="match status" value="1"/>
</dbReference>
<dbReference type="Gene3D" id="3.20.20.70">
    <property type="entry name" value="Aldolase class I"/>
    <property type="match status" value="1"/>
</dbReference>
<dbReference type="HAMAP" id="MF_00147_B">
    <property type="entry name" value="TIM_B"/>
    <property type="match status" value="1"/>
</dbReference>
<dbReference type="InterPro" id="IPR013785">
    <property type="entry name" value="Aldolase_TIM"/>
</dbReference>
<dbReference type="InterPro" id="IPR035990">
    <property type="entry name" value="TIM_sf"/>
</dbReference>
<dbReference type="InterPro" id="IPR022896">
    <property type="entry name" value="TrioseP_Isoase_bac/euk"/>
</dbReference>
<dbReference type="InterPro" id="IPR000652">
    <property type="entry name" value="Triosephosphate_isomerase"/>
</dbReference>
<dbReference type="InterPro" id="IPR020861">
    <property type="entry name" value="Triosephosphate_isomerase_AS"/>
</dbReference>
<dbReference type="NCBIfam" id="TIGR00419">
    <property type="entry name" value="tim"/>
    <property type="match status" value="1"/>
</dbReference>
<dbReference type="PANTHER" id="PTHR21139">
    <property type="entry name" value="TRIOSEPHOSPHATE ISOMERASE"/>
    <property type="match status" value="1"/>
</dbReference>
<dbReference type="PANTHER" id="PTHR21139:SF42">
    <property type="entry name" value="TRIOSEPHOSPHATE ISOMERASE"/>
    <property type="match status" value="1"/>
</dbReference>
<dbReference type="Pfam" id="PF00121">
    <property type="entry name" value="TIM"/>
    <property type="match status" value="1"/>
</dbReference>
<dbReference type="SUPFAM" id="SSF51351">
    <property type="entry name" value="Triosephosphate isomerase (TIM)"/>
    <property type="match status" value="1"/>
</dbReference>
<dbReference type="PROSITE" id="PS00171">
    <property type="entry name" value="TIM_1"/>
    <property type="match status" value="1"/>
</dbReference>
<dbReference type="PROSITE" id="PS51440">
    <property type="entry name" value="TIM_2"/>
    <property type="match status" value="1"/>
</dbReference>
<gene>
    <name evidence="1" type="primary">tpiA</name>
    <name type="ordered locus">CBUD_0542</name>
</gene>
<accession>A9KBK2</accession>
<feature type="chain" id="PRO_1000076640" description="Triosephosphate isomerase">
    <location>
        <begin position="1"/>
        <end position="255"/>
    </location>
</feature>
<feature type="active site" description="Electrophile" evidence="1">
    <location>
        <position position="96"/>
    </location>
</feature>
<feature type="active site" description="Proton acceptor" evidence="1">
    <location>
        <position position="169"/>
    </location>
</feature>
<feature type="binding site" evidence="1">
    <location>
        <begin position="10"/>
        <end position="12"/>
    </location>
    <ligand>
        <name>substrate</name>
    </ligand>
</feature>
<feature type="binding site" evidence="1">
    <location>
        <position position="175"/>
    </location>
    <ligand>
        <name>substrate</name>
    </ligand>
</feature>
<feature type="binding site" evidence="1">
    <location>
        <position position="214"/>
    </location>
    <ligand>
        <name>substrate</name>
    </ligand>
</feature>
<feature type="binding site" evidence="1">
    <location>
        <begin position="235"/>
        <end position="236"/>
    </location>
    <ligand>
        <name>substrate</name>
    </ligand>
</feature>
<name>TPIS_COXBN</name>
<protein>
    <recommendedName>
        <fullName evidence="1">Triosephosphate isomerase</fullName>
        <shortName evidence="1">TIM</shortName>
        <shortName evidence="1">TPI</shortName>
        <ecNumber evidence="1">5.3.1.1</ecNumber>
    </recommendedName>
    <alternativeName>
        <fullName evidence="1">Triose-phosphate isomerase</fullName>
    </alternativeName>
</protein>
<comment type="function">
    <text evidence="1">Involved in the gluconeogenesis. Catalyzes stereospecifically the conversion of dihydroxyacetone phosphate (DHAP) to D-glyceraldehyde-3-phosphate (G3P).</text>
</comment>
<comment type="catalytic activity">
    <reaction evidence="1">
        <text>D-glyceraldehyde 3-phosphate = dihydroxyacetone phosphate</text>
        <dbReference type="Rhea" id="RHEA:18585"/>
        <dbReference type="ChEBI" id="CHEBI:57642"/>
        <dbReference type="ChEBI" id="CHEBI:59776"/>
        <dbReference type="EC" id="5.3.1.1"/>
    </reaction>
</comment>
<comment type="pathway">
    <text evidence="1">Carbohydrate biosynthesis; gluconeogenesis.</text>
</comment>
<comment type="pathway">
    <text evidence="1">Carbohydrate degradation; glycolysis; D-glyceraldehyde 3-phosphate from glycerone phosphate: step 1/1.</text>
</comment>
<comment type="subunit">
    <text evidence="1">Homodimer.</text>
</comment>
<comment type="subcellular location">
    <subcellularLocation>
        <location evidence="1">Cytoplasm</location>
    </subcellularLocation>
</comment>
<comment type="similarity">
    <text evidence="1">Belongs to the triosephosphate isomerase family.</text>
</comment>
<comment type="sequence caution" evidence="2">
    <conflict type="erroneous initiation">
        <sequence resource="EMBL-CDS" id="ABS77929"/>
    </conflict>
</comment>
<keyword id="KW-0963">Cytoplasm</keyword>
<keyword id="KW-0312">Gluconeogenesis</keyword>
<keyword id="KW-0324">Glycolysis</keyword>
<keyword id="KW-0413">Isomerase</keyword>